<dbReference type="EMBL" id="AE003852">
    <property type="protein sequence ID" value="AAF94865.1"/>
    <property type="status" value="ALT_INIT"/>
    <property type="molecule type" value="Genomic_DNA"/>
</dbReference>
<dbReference type="PIR" id="E82166">
    <property type="entry name" value="E82166"/>
</dbReference>
<dbReference type="RefSeq" id="NP_231351.1">
    <property type="nucleotide sequence ID" value="NC_002505.1"/>
</dbReference>
<dbReference type="SMR" id="Q9KRC7"/>
<dbReference type="STRING" id="243277.VC_1715"/>
<dbReference type="DNASU" id="2613720"/>
<dbReference type="EnsemblBacteria" id="AAF94865">
    <property type="protein sequence ID" value="AAF94865"/>
    <property type="gene ID" value="VC_1715"/>
</dbReference>
<dbReference type="KEGG" id="vch:VC_1715"/>
<dbReference type="PATRIC" id="fig|243277.26.peg.1641"/>
<dbReference type="eggNOG" id="COG3095">
    <property type="taxonomic scope" value="Bacteria"/>
</dbReference>
<dbReference type="HOGENOM" id="CLU_1146408_0_0_6"/>
<dbReference type="Proteomes" id="UP000000584">
    <property type="component" value="Chromosome 1"/>
</dbReference>
<dbReference type="GO" id="GO:0005737">
    <property type="term" value="C:cytoplasm"/>
    <property type="evidence" value="ECO:0007669"/>
    <property type="project" value="UniProtKB-UniRule"/>
</dbReference>
<dbReference type="GO" id="GO:0009295">
    <property type="term" value="C:nucleoid"/>
    <property type="evidence" value="ECO:0007669"/>
    <property type="project" value="UniProtKB-SubCell"/>
</dbReference>
<dbReference type="GO" id="GO:0051301">
    <property type="term" value="P:cell division"/>
    <property type="evidence" value="ECO:0007669"/>
    <property type="project" value="UniProtKB-KW"/>
</dbReference>
<dbReference type="GO" id="GO:0030261">
    <property type="term" value="P:chromosome condensation"/>
    <property type="evidence" value="ECO:0007669"/>
    <property type="project" value="UniProtKB-KW"/>
</dbReference>
<dbReference type="GO" id="GO:0007059">
    <property type="term" value="P:chromosome segregation"/>
    <property type="evidence" value="ECO:0007669"/>
    <property type="project" value="UniProtKB-UniRule"/>
</dbReference>
<dbReference type="GO" id="GO:0006260">
    <property type="term" value="P:DNA replication"/>
    <property type="evidence" value="ECO:0007669"/>
    <property type="project" value="UniProtKB-UniRule"/>
</dbReference>
<dbReference type="FunFam" id="1.10.10.2260:FF:000001">
    <property type="entry name" value="Chromosome partition protein MukE"/>
    <property type="match status" value="1"/>
</dbReference>
<dbReference type="Gene3D" id="1.10.10.2250">
    <property type="match status" value="1"/>
</dbReference>
<dbReference type="Gene3D" id="1.10.10.2260">
    <property type="entry name" value="MukE-like family, C-terminal domain"/>
    <property type="match status" value="1"/>
</dbReference>
<dbReference type="HAMAP" id="MF_01802">
    <property type="entry name" value="MukE"/>
    <property type="match status" value="1"/>
</dbReference>
<dbReference type="InterPro" id="IPR042037">
    <property type="entry name" value="MukE_C"/>
</dbReference>
<dbReference type="InterPro" id="IPR042038">
    <property type="entry name" value="MukE_N"/>
</dbReference>
<dbReference type="InterPro" id="IPR007385">
    <property type="entry name" value="Scp_MukE"/>
</dbReference>
<dbReference type="NCBIfam" id="NF003602">
    <property type="entry name" value="PRK05256.1"/>
    <property type="match status" value="1"/>
</dbReference>
<dbReference type="Pfam" id="PF04288">
    <property type="entry name" value="MukE"/>
    <property type="match status" value="1"/>
</dbReference>
<keyword id="KW-0131">Cell cycle</keyword>
<keyword id="KW-0132">Cell division</keyword>
<keyword id="KW-0159">Chromosome partition</keyword>
<keyword id="KW-0963">Cytoplasm</keyword>
<keyword id="KW-0226">DNA condensation</keyword>
<keyword id="KW-1185">Reference proteome</keyword>
<protein>
    <recommendedName>
        <fullName evidence="1">Chromosome partition protein MukE</fullName>
    </recommendedName>
</protein>
<sequence>MPENLAKAIANPLFPALDSLLRAGRHVSSDDLDNHAFLSDFEPDLALFYQRYHTELVRAPEGFFYLRPRSTSLINRSVLSELDMLVGKVLCFLYLSPERLAHEGIFTNQELYDELLTLVEEKKLMKLVTNRASGSDLDREKLFEKVRTSLRRLRRLGMVITIGDTGKFRITEAVFRFGADVRLGGDVREAQLRLIRDGEAVVHTPEPSQQSLLENPTAEYDEEQTEWEDEA</sequence>
<accession>Q9KRC7</accession>
<proteinExistence type="inferred from homology"/>
<reference key="1">
    <citation type="journal article" date="2000" name="Nature">
        <title>DNA sequence of both chromosomes of the cholera pathogen Vibrio cholerae.</title>
        <authorList>
            <person name="Heidelberg J.F."/>
            <person name="Eisen J.A."/>
            <person name="Nelson W.C."/>
            <person name="Clayton R.A."/>
            <person name="Gwinn M.L."/>
            <person name="Dodson R.J."/>
            <person name="Haft D.H."/>
            <person name="Hickey E.K."/>
            <person name="Peterson J.D."/>
            <person name="Umayam L.A."/>
            <person name="Gill S.R."/>
            <person name="Nelson K.E."/>
            <person name="Read T.D."/>
            <person name="Tettelin H."/>
            <person name="Richardson D.L."/>
            <person name="Ermolaeva M.D."/>
            <person name="Vamathevan J.J."/>
            <person name="Bass S."/>
            <person name="Qin H."/>
            <person name="Dragoi I."/>
            <person name="Sellers P."/>
            <person name="McDonald L.A."/>
            <person name="Utterback T.R."/>
            <person name="Fleischmann R.D."/>
            <person name="Nierman W.C."/>
            <person name="White O."/>
            <person name="Salzberg S.L."/>
            <person name="Smith H.O."/>
            <person name="Colwell R.R."/>
            <person name="Mekalanos J.J."/>
            <person name="Venter J.C."/>
            <person name="Fraser C.M."/>
        </authorList>
    </citation>
    <scope>NUCLEOTIDE SEQUENCE [LARGE SCALE GENOMIC DNA]</scope>
    <source>
        <strain>ATCC 39315 / El Tor Inaba N16961</strain>
    </source>
</reference>
<evidence type="ECO:0000255" key="1">
    <source>
        <dbReference type="HAMAP-Rule" id="MF_01802"/>
    </source>
</evidence>
<evidence type="ECO:0000256" key="2">
    <source>
        <dbReference type="SAM" id="MobiDB-lite"/>
    </source>
</evidence>
<evidence type="ECO:0000305" key="3"/>
<gene>
    <name evidence="1" type="primary">mukE</name>
    <name type="ordered locus">VC_1715</name>
</gene>
<comment type="function">
    <text evidence="1">Involved in chromosome condensation, segregation and cell cycle progression. May participate in facilitating chromosome segregation by condensation DNA from both sides of a centrally located replisome during cell division. Probably acts via its interaction with MukB and MukF.</text>
</comment>
<comment type="subunit">
    <text evidence="1">Interacts, and probably forms a ternary complex, with MukF and MukB. The complex formation is stimulated by calcium or magnesium.</text>
</comment>
<comment type="subcellular location">
    <subcellularLocation>
        <location evidence="1">Cytoplasm</location>
        <location evidence="1">Nucleoid</location>
    </subcellularLocation>
    <text evidence="1">Restricted to the nucleoid region.</text>
</comment>
<comment type="similarity">
    <text evidence="1">Belongs to the MukE family.</text>
</comment>
<comment type="sequence caution" evidence="3">
    <conflict type="erroneous initiation">
        <sequence resource="EMBL-CDS" id="AAF94865"/>
    </conflict>
</comment>
<organism>
    <name type="scientific">Vibrio cholerae serotype O1 (strain ATCC 39315 / El Tor Inaba N16961)</name>
    <dbReference type="NCBI Taxonomy" id="243277"/>
    <lineage>
        <taxon>Bacteria</taxon>
        <taxon>Pseudomonadati</taxon>
        <taxon>Pseudomonadota</taxon>
        <taxon>Gammaproteobacteria</taxon>
        <taxon>Vibrionales</taxon>
        <taxon>Vibrionaceae</taxon>
        <taxon>Vibrio</taxon>
    </lineage>
</organism>
<name>MUKE_VIBCH</name>
<feature type="chain" id="PRO_0000206804" description="Chromosome partition protein MukE">
    <location>
        <begin position="1"/>
        <end position="231"/>
    </location>
</feature>
<feature type="region of interest" description="Disordered" evidence="2">
    <location>
        <begin position="204"/>
        <end position="231"/>
    </location>
</feature>
<feature type="compositionally biased region" description="Acidic residues" evidence="2">
    <location>
        <begin position="219"/>
        <end position="231"/>
    </location>
</feature>